<reference key="1">
    <citation type="journal article" date="1999" name="Nature">
        <title>Sequence and analysis of chromosome 2 of the plant Arabidopsis thaliana.</title>
        <authorList>
            <person name="Lin X."/>
            <person name="Kaul S."/>
            <person name="Rounsley S.D."/>
            <person name="Shea T.P."/>
            <person name="Benito M.-I."/>
            <person name="Town C.D."/>
            <person name="Fujii C.Y."/>
            <person name="Mason T.M."/>
            <person name="Bowman C.L."/>
            <person name="Barnstead M.E."/>
            <person name="Feldblyum T.V."/>
            <person name="Buell C.R."/>
            <person name="Ketchum K.A."/>
            <person name="Lee J.J."/>
            <person name="Ronning C.M."/>
            <person name="Koo H.L."/>
            <person name="Moffat K.S."/>
            <person name="Cronin L.A."/>
            <person name="Shen M."/>
            <person name="Pai G."/>
            <person name="Van Aken S."/>
            <person name="Umayam L."/>
            <person name="Tallon L.J."/>
            <person name="Gill J.E."/>
            <person name="Adams M.D."/>
            <person name="Carrera A.J."/>
            <person name="Creasy T.H."/>
            <person name="Goodman H.M."/>
            <person name="Somerville C.R."/>
            <person name="Copenhaver G.P."/>
            <person name="Preuss D."/>
            <person name="Nierman W.C."/>
            <person name="White O."/>
            <person name="Eisen J.A."/>
            <person name="Salzberg S.L."/>
            <person name="Fraser C.M."/>
            <person name="Venter J.C."/>
        </authorList>
    </citation>
    <scope>NUCLEOTIDE SEQUENCE [LARGE SCALE GENOMIC DNA]</scope>
    <source>
        <strain>cv. Columbia</strain>
    </source>
</reference>
<reference key="2">
    <citation type="journal article" date="2017" name="Plant J.">
        <title>Araport11: a complete reannotation of the Arabidopsis thaliana reference genome.</title>
        <authorList>
            <person name="Cheng C.Y."/>
            <person name="Krishnakumar V."/>
            <person name="Chan A.P."/>
            <person name="Thibaud-Nissen F."/>
            <person name="Schobel S."/>
            <person name="Town C.D."/>
        </authorList>
    </citation>
    <scope>GENOME REANNOTATION</scope>
    <source>
        <strain>cv. Columbia</strain>
    </source>
</reference>
<reference key="3">
    <citation type="journal article" date="2008" name="Plant J.">
        <title>Identification of a biologically active, small, secreted peptide in Arabidopsis by in silico gene screening, followed by LC-MS-based structure analysis.</title>
        <authorList>
            <person name="Ohyama K."/>
            <person name="Ogawa M."/>
            <person name="Matsubayashi Y."/>
        </authorList>
    </citation>
    <scope>TISSUE SPECIFICITY</scope>
</reference>
<reference key="4">
    <citation type="journal article" date="2011" name="Arabidopsis Book">
        <title>Small post-translationally modified Peptide signals in Arabidopsis.</title>
        <authorList>
            <person name="Matsubayashi Y."/>
        </authorList>
    </citation>
    <scope>REVIEW</scope>
</reference>
<reference key="5">
    <citation type="journal article" date="2013" name="J. Exp. Bot.">
        <title>The CEP family in land plants: evolutionary analyses, expression studies, and role in Arabidopsis shoot development.</title>
        <authorList>
            <person name="Roberts I."/>
            <person name="Smith S."/>
            <person name="De Rybel B."/>
            <person name="Van Den Broeke J."/>
            <person name="Smet W."/>
            <person name="De Cokere S."/>
            <person name="Mispelaere M."/>
            <person name="De Smet I."/>
            <person name="Beeckman T."/>
        </authorList>
    </citation>
    <scope>TISSUE SPECIFICITY</scope>
    <scope>GENE FAMILY</scope>
    <source>
        <strain>cv. Columbia</strain>
    </source>
</reference>
<reference key="6">
    <citation type="journal article" date="2013" name="J. Exp. Bot.">
        <title>CEP genes regulate root and shoot development in response to environmental cues and are specific to seed plants.</title>
        <authorList>
            <person name="Delay C."/>
            <person name="Imin N."/>
            <person name="Djordjevic M.A."/>
        </authorList>
    </citation>
    <scope>FUNCTION</scope>
    <scope>INDUCTION BY AMMONIUM CHLORIDE STARVATION; NITROGEN DEPLETION AND OSMOTIC STRESS</scope>
    <scope>GENE FAMILY</scope>
    <scope>NOMENCLATURE</scope>
    <source>
        <strain>cv. Columbia</strain>
    </source>
</reference>
<reference key="7">
    <citation type="journal article" date="2014" name="Science">
        <title>Perception of root-derived peptides by shoot LRR-RKs mediates systemic N-demand signaling.</title>
        <authorList>
            <person name="Tabata R."/>
            <person name="Sumida K."/>
            <person name="Yoshii T."/>
            <person name="Ohyama K."/>
            <person name="Shinohara H."/>
            <person name="Matsubayashi Y."/>
        </authorList>
    </citation>
    <scope>FUNCTION</scope>
    <source>
        <strain>cv. No-0</strain>
    </source>
</reference>
<gene>
    <name evidence="10" type="primary">CEP4</name>
    <name evidence="12" type="ordered locus">At2g35612</name>
    <name evidence="11" type="ORF">T20F21</name>
</gene>
<protein>
    <recommendedName>
        <fullName evidence="10">Precursor of CEP4</fullName>
        <shortName evidence="10">PCEP4</shortName>
    </recommendedName>
    <component>
        <recommendedName>
            <fullName evidence="10">C-terminally encoded peptide 4</fullName>
            <shortName evidence="10">CEP4</shortName>
        </recommendedName>
    </component>
</protein>
<proteinExistence type="evidence at transcript level"/>
<comment type="function">
    <text evidence="8 9">Extracellular signaling peptide that represses primary root growth rate. Promotes shoot growth and modulates leaf morphology (PubMed:24179096). Regulates systemic nitrogen (N)-demand signaling. Mediates up-regulation of genes involved in N uptake and assimilation pathways (PubMed:25324386).</text>
</comment>
<comment type="subunit">
    <text evidence="3">Interacts with CEP receptors (e.g. CEPR1 and CEPR2).</text>
</comment>
<comment type="subcellular location">
    <molecule>C-terminally encoded peptide 4</molecule>
    <subcellularLocation>
        <location evidence="1">Secreted</location>
        <location evidence="1">Extracellular space</location>
        <location evidence="1">Apoplast</location>
    </subcellularLocation>
    <text evidence="1">Accumulates in xylem sap.</text>
</comment>
<comment type="tissue specificity">
    <text evidence="6 7">Expressed at low levels in flowers (PubMed:18315543). Present in lateral roots, shoot apical meristem (SAM), flowers and siliques (PubMed:24179095).</text>
</comment>
<comment type="induction">
    <text evidence="8">Slightly induced in roots by nitrogen and ammonium chloride NH(4)Cl starvation. Accumulates in response to osmotic stress (e.g. mannitol and salt NaCl).</text>
</comment>
<comment type="PTM">
    <text evidence="3">The mature small signaling peptide is generated by proteolytic processing of the longer precursor.</text>
</comment>
<comment type="similarity">
    <text evidence="11">Belongs to the C-terminally encoded plant signaling peptide (CEP) family.</text>
</comment>
<sequence length="86" mass="9755">MVSRGCSITVLFRFLIVLLVIQVHFENTKAARHAPVVSWSPPEPPKDDFVWYHKINRFKNIEQDAFRPTHQGPSQGIGHKNPPGAP</sequence>
<keyword id="KW-0052">Apoplast</keyword>
<keyword id="KW-0217">Developmental protein</keyword>
<keyword id="KW-0372">Hormone</keyword>
<keyword id="KW-0379">Hydroxylation</keyword>
<keyword id="KW-1185">Reference proteome</keyword>
<keyword id="KW-0964">Secreted</keyword>
<keyword id="KW-0732">Signal</keyword>
<feature type="signal peptide" evidence="4">
    <location>
        <begin position="1"/>
        <end position="30"/>
    </location>
</feature>
<feature type="propeptide" id="PRO_0000439971" evidence="11">
    <location>
        <begin position="31"/>
        <end position="64"/>
    </location>
</feature>
<feature type="peptide" id="PRO_0000439972" description="C-terminally encoded peptide 4" evidence="2">
    <location>
        <begin position="65"/>
        <end position="79"/>
    </location>
</feature>
<feature type="propeptide" id="PRO_0000439973" evidence="11">
    <location>
        <begin position="80"/>
        <end position="86"/>
    </location>
</feature>
<feature type="region of interest" description="Disordered" evidence="5">
    <location>
        <begin position="63"/>
        <end position="86"/>
    </location>
</feature>
<feature type="modified residue" description="Hydroxyproline" evidence="3">
    <location>
        <position position="68"/>
    </location>
</feature>
<feature type="modified residue" description="Hydroxyproline" evidence="2">
    <location>
        <position position="73"/>
    </location>
</feature>
<dbReference type="EMBL" id="AC006068">
    <property type="status" value="NOT_ANNOTATED_CDS"/>
    <property type="molecule type" value="Genomic_DNA"/>
</dbReference>
<dbReference type="EMBL" id="CP002685">
    <property type="protein sequence ID" value="AEC09129.1"/>
    <property type="molecule type" value="Genomic_DNA"/>
</dbReference>
<dbReference type="RefSeq" id="NP_001318359.1">
    <property type="nucleotide sequence ID" value="NM_001336564.1"/>
</dbReference>
<dbReference type="SMR" id="Q3EBM6"/>
<dbReference type="STRING" id="3702.Q3EBM6"/>
<dbReference type="PaxDb" id="3702-AT2G35612.1"/>
<dbReference type="EnsemblPlants" id="AT2G35612.1">
    <property type="protein sequence ID" value="AT2G35612.1"/>
    <property type="gene ID" value="AT2G35612"/>
</dbReference>
<dbReference type="GeneID" id="28718329"/>
<dbReference type="Gramene" id="AT2G35612.1">
    <property type="protein sequence ID" value="AT2G35612.1"/>
    <property type="gene ID" value="AT2G35612"/>
</dbReference>
<dbReference type="KEGG" id="ath:AT2G35612"/>
<dbReference type="Araport" id="AT2G35612"/>
<dbReference type="TAIR" id="AT2G35612"/>
<dbReference type="eggNOG" id="KOG1186">
    <property type="taxonomic scope" value="Eukaryota"/>
</dbReference>
<dbReference type="HOGENOM" id="CLU_2444970_0_0_1"/>
<dbReference type="InParanoid" id="Q3EBM6"/>
<dbReference type="OMA" id="HKNPPGA"/>
<dbReference type="OrthoDB" id="1938149at2759"/>
<dbReference type="PhylomeDB" id="Q3EBM6"/>
<dbReference type="PRO" id="PR:Q3EBM6"/>
<dbReference type="Proteomes" id="UP000006548">
    <property type="component" value="Chromosome 2"/>
</dbReference>
<dbReference type="ExpressionAtlas" id="Q3EBM6">
    <property type="expression patterns" value="baseline and differential"/>
</dbReference>
<dbReference type="GO" id="GO:0048046">
    <property type="term" value="C:apoplast"/>
    <property type="evidence" value="ECO:0000250"/>
    <property type="project" value="UniProtKB"/>
</dbReference>
<dbReference type="GO" id="GO:0005179">
    <property type="term" value="F:hormone activity"/>
    <property type="evidence" value="ECO:0000250"/>
    <property type="project" value="UniProtKB"/>
</dbReference>
<dbReference type="GO" id="GO:0006995">
    <property type="term" value="P:cellular response to nitrogen starvation"/>
    <property type="evidence" value="ECO:0000270"/>
    <property type="project" value="UniProtKB"/>
</dbReference>
<dbReference type="GO" id="GO:1902025">
    <property type="term" value="P:nitrate import"/>
    <property type="evidence" value="ECO:0000314"/>
    <property type="project" value="UniProtKB"/>
</dbReference>
<dbReference type="GO" id="GO:1901371">
    <property type="term" value="P:regulation of leaf morphogenesis"/>
    <property type="evidence" value="ECO:0000315"/>
    <property type="project" value="UniProtKB"/>
</dbReference>
<dbReference type="GO" id="GO:2000280">
    <property type="term" value="P:regulation of root development"/>
    <property type="evidence" value="ECO:0000315"/>
    <property type="project" value="UniProtKB"/>
</dbReference>
<dbReference type="GO" id="GO:0048831">
    <property type="term" value="P:regulation of shoot system development"/>
    <property type="evidence" value="ECO:0000315"/>
    <property type="project" value="UniProtKB"/>
</dbReference>
<dbReference type="GO" id="GO:0060359">
    <property type="term" value="P:response to ammonium ion"/>
    <property type="evidence" value="ECO:0000270"/>
    <property type="project" value="UniProtKB"/>
</dbReference>
<dbReference type="GO" id="GO:0006970">
    <property type="term" value="P:response to osmotic stress"/>
    <property type="evidence" value="ECO:0000270"/>
    <property type="project" value="UniProtKB"/>
</dbReference>
<dbReference type="GO" id="GO:0009651">
    <property type="term" value="P:response to salt stress"/>
    <property type="evidence" value="ECO:0000270"/>
    <property type="project" value="UniProtKB"/>
</dbReference>
<accession>Q3EBM6</accession>
<evidence type="ECO:0000250" key="1">
    <source>
        <dbReference type="UniProtKB" id="O80460"/>
    </source>
</evidence>
<evidence type="ECO:0000250" key="2">
    <source>
        <dbReference type="UniProtKB" id="Q058G9"/>
    </source>
</evidence>
<evidence type="ECO:0000250" key="3">
    <source>
        <dbReference type="UniProtKB" id="Q8L8Y3"/>
    </source>
</evidence>
<evidence type="ECO:0000255" key="4"/>
<evidence type="ECO:0000256" key="5">
    <source>
        <dbReference type="SAM" id="MobiDB-lite"/>
    </source>
</evidence>
<evidence type="ECO:0000269" key="6">
    <source>
    </source>
</evidence>
<evidence type="ECO:0000269" key="7">
    <source>
    </source>
</evidence>
<evidence type="ECO:0000269" key="8">
    <source>
    </source>
</evidence>
<evidence type="ECO:0000269" key="9">
    <source>
    </source>
</evidence>
<evidence type="ECO:0000303" key="10">
    <source>
    </source>
</evidence>
<evidence type="ECO:0000305" key="11"/>
<evidence type="ECO:0000312" key="12">
    <source>
        <dbReference type="Araport" id="AT2G35612"/>
    </source>
</evidence>
<organism>
    <name type="scientific">Arabidopsis thaliana</name>
    <name type="common">Mouse-ear cress</name>
    <dbReference type="NCBI Taxonomy" id="3702"/>
    <lineage>
        <taxon>Eukaryota</taxon>
        <taxon>Viridiplantae</taxon>
        <taxon>Streptophyta</taxon>
        <taxon>Embryophyta</taxon>
        <taxon>Tracheophyta</taxon>
        <taxon>Spermatophyta</taxon>
        <taxon>Magnoliopsida</taxon>
        <taxon>eudicotyledons</taxon>
        <taxon>Gunneridae</taxon>
        <taxon>Pentapetalae</taxon>
        <taxon>rosids</taxon>
        <taxon>malvids</taxon>
        <taxon>Brassicales</taxon>
        <taxon>Brassicaceae</taxon>
        <taxon>Camelineae</taxon>
        <taxon>Arabidopsis</taxon>
    </lineage>
</organism>
<name>PCEP4_ARATH</name>